<feature type="chain" id="PRO_0000237164" description="Large ribosomal subunit protein uL2">
    <location>
        <begin position="1"/>
        <end position="275"/>
    </location>
</feature>
<feature type="region of interest" description="Disordered" evidence="2">
    <location>
        <begin position="38"/>
        <end position="60"/>
    </location>
</feature>
<feature type="region of interest" description="Disordered" evidence="2">
    <location>
        <begin position="224"/>
        <end position="257"/>
    </location>
</feature>
<feature type="compositionally biased region" description="Polar residues" evidence="2">
    <location>
        <begin position="38"/>
        <end position="53"/>
    </location>
</feature>
<gene>
    <name evidence="1" type="primary">rplB</name>
    <name type="ordered locus">BMA2629</name>
</gene>
<dbReference type="EMBL" id="CP000010">
    <property type="protein sequence ID" value="AAU47867.1"/>
    <property type="molecule type" value="Genomic_DNA"/>
</dbReference>
<dbReference type="RefSeq" id="WP_004199274.1">
    <property type="nucleotide sequence ID" value="NC_006348.1"/>
</dbReference>
<dbReference type="RefSeq" id="YP_104163.1">
    <property type="nucleotide sequence ID" value="NC_006348.1"/>
</dbReference>
<dbReference type="SMR" id="Q62GK8"/>
<dbReference type="GeneID" id="93061829"/>
<dbReference type="KEGG" id="bma:BMA2629"/>
<dbReference type="PATRIC" id="fig|243160.12.peg.2700"/>
<dbReference type="eggNOG" id="COG0090">
    <property type="taxonomic scope" value="Bacteria"/>
</dbReference>
<dbReference type="HOGENOM" id="CLU_036235_2_1_4"/>
<dbReference type="Proteomes" id="UP000006693">
    <property type="component" value="Chromosome 1"/>
</dbReference>
<dbReference type="GO" id="GO:0015934">
    <property type="term" value="C:large ribosomal subunit"/>
    <property type="evidence" value="ECO:0007669"/>
    <property type="project" value="InterPro"/>
</dbReference>
<dbReference type="GO" id="GO:0019843">
    <property type="term" value="F:rRNA binding"/>
    <property type="evidence" value="ECO:0007669"/>
    <property type="project" value="UniProtKB-UniRule"/>
</dbReference>
<dbReference type="GO" id="GO:0003735">
    <property type="term" value="F:structural constituent of ribosome"/>
    <property type="evidence" value="ECO:0007669"/>
    <property type="project" value="InterPro"/>
</dbReference>
<dbReference type="GO" id="GO:0016740">
    <property type="term" value="F:transferase activity"/>
    <property type="evidence" value="ECO:0007669"/>
    <property type="project" value="InterPro"/>
</dbReference>
<dbReference type="GO" id="GO:0002181">
    <property type="term" value="P:cytoplasmic translation"/>
    <property type="evidence" value="ECO:0007669"/>
    <property type="project" value="TreeGrafter"/>
</dbReference>
<dbReference type="FunFam" id="2.30.30.30:FF:000001">
    <property type="entry name" value="50S ribosomal protein L2"/>
    <property type="match status" value="1"/>
</dbReference>
<dbReference type="FunFam" id="2.40.50.140:FF:000003">
    <property type="entry name" value="50S ribosomal protein L2"/>
    <property type="match status" value="1"/>
</dbReference>
<dbReference type="FunFam" id="4.10.950.10:FF:000001">
    <property type="entry name" value="50S ribosomal protein L2"/>
    <property type="match status" value="1"/>
</dbReference>
<dbReference type="Gene3D" id="2.30.30.30">
    <property type="match status" value="1"/>
</dbReference>
<dbReference type="Gene3D" id="2.40.50.140">
    <property type="entry name" value="Nucleic acid-binding proteins"/>
    <property type="match status" value="1"/>
</dbReference>
<dbReference type="Gene3D" id="4.10.950.10">
    <property type="entry name" value="Ribosomal protein L2, domain 3"/>
    <property type="match status" value="1"/>
</dbReference>
<dbReference type="HAMAP" id="MF_01320_B">
    <property type="entry name" value="Ribosomal_uL2_B"/>
    <property type="match status" value="1"/>
</dbReference>
<dbReference type="InterPro" id="IPR012340">
    <property type="entry name" value="NA-bd_OB-fold"/>
</dbReference>
<dbReference type="InterPro" id="IPR014722">
    <property type="entry name" value="Rib_uL2_dom2"/>
</dbReference>
<dbReference type="InterPro" id="IPR002171">
    <property type="entry name" value="Ribosomal_uL2"/>
</dbReference>
<dbReference type="InterPro" id="IPR005880">
    <property type="entry name" value="Ribosomal_uL2_bac/org-type"/>
</dbReference>
<dbReference type="InterPro" id="IPR022669">
    <property type="entry name" value="Ribosomal_uL2_C"/>
</dbReference>
<dbReference type="InterPro" id="IPR022671">
    <property type="entry name" value="Ribosomal_uL2_CS"/>
</dbReference>
<dbReference type="InterPro" id="IPR014726">
    <property type="entry name" value="Ribosomal_uL2_dom3"/>
</dbReference>
<dbReference type="InterPro" id="IPR022666">
    <property type="entry name" value="Ribosomal_uL2_RNA-bd_dom"/>
</dbReference>
<dbReference type="InterPro" id="IPR008991">
    <property type="entry name" value="Translation_prot_SH3-like_sf"/>
</dbReference>
<dbReference type="NCBIfam" id="TIGR01171">
    <property type="entry name" value="rplB_bact"/>
    <property type="match status" value="1"/>
</dbReference>
<dbReference type="PANTHER" id="PTHR13691:SF5">
    <property type="entry name" value="LARGE RIBOSOMAL SUBUNIT PROTEIN UL2M"/>
    <property type="match status" value="1"/>
</dbReference>
<dbReference type="PANTHER" id="PTHR13691">
    <property type="entry name" value="RIBOSOMAL PROTEIN L2"/>
    <property type="match status" value="1"/>
</dbReference>
<dbReference type="Pfam" id="PF00181">
    <property type="entry name" value="Ribosomal_L2"/>
    <property type="match status" value="1"/>
</dbReference>
<dbReference type="Pfam" id="PF03947">
    <property type="entry name" value="Ribosomal_L2_C"/>
    <property type="match status" value="1"/>
</dbReference>
<dbReference type="PIRSF" id="PIRSF002158">
    <property type="entry name" value="Ribosomal_L2"/>
    <property type="match status" value="1"/>
</dbReference>
<dbReference type="SMART" id="SM01383">
    <property type="entry name" value="Ribosomal_L2"/>
    <property type="match status" value="1"/>
</dbReference>
<dbReference type="SMART" id="SM01382">
    <property type="entry name" value="Ribosomal_L2_C"/>
    <property type="match status" value="1"/>
</dbReference>
<dbReference type="SUPFAM" id="SSF50249">
    <property type="entry name" value="Nucleic acid-binding proteins"/>
    <property type="match status" value="1"/>
</dbReference>
<dbReference type="SUPFAM" id="SSF50104">
    <property type="entry name" value="Translation proteins SH3-like domain"/>
    <property type="match status" value="1"/>
</dbReference>
<dbReference type="PROSITE" id="PS00467">
    <property type="entry name" value="RIBOSOMAL_L2"/>
    <property type="match status" value="1"/>
</dbReference>
<proteinExistence type="inferred from homology"/>
<comment type="function">
    <text evidence="1">One of the primary rRNA binding proteins. Required for association of the 30S and 50S subunits to form the 70S ribosome, for tRNA binding and peptide bond formation. It has been suggested to have peptidyltransferase activity; this is somewhat controversial. Makes several contacts with the 16S rRNA in the 70S ribosome.</text>
</comment>
<comment type="subunit">
    <text evidence="1">Part of the 50S ribosomal subunit. Forms a bridge to the 30S subunit in the 70S ribosome.</text>
</comment>
<comment type="similarity">
    <text evidence="1">Belongs to the universal ribosomal protein uL2 family.</text>
</comment>
<organism>
    <name type="scientific">Burkholderia mallei (strain ATCC 23344)</name>
    <dbReference type="NCBI Taxonomy" id="243160"/>
    <lineage>
        <taxon>Bacteria</taxon>
        <taxon>Pseudomonadati</taxon>
        <taxon>Pseudomonadota</taxon>
        <taxon>Betaproteobacteria</taxon>
        <taxon>Burkholderiales</taxon>
        <taxon>Burkholderiaceae</taxon>
        <taxon>Burkholderia</taxon>
        <taxon>pseudomallei group</taxon>
    </lineage>
</organism>
<keyword id="KW-1185">Reference proteome</keyword>
<keyword id="KW-0687">Ribonucleoprotein</keyword>
<keyword id="KW-0689">Ribosomal protein</keyword>
<keyword id="KW-0694">RNA-binding</keyword>
<keyword id="KW-0699">rRNA-binding</keyword>
<sequence>MAIVKVKPTSPGRRAMVKVVNKDLHKGKPHAALLDTQSSKAGRNNNGRITTRHQGGGHKQHYRVIDFRRTKDGIPAKVERLEYDPNRSANIALVLYADGERRYIIAPKGVTVGQQLMSGSEAPIRAGNTLPIRNIPVGTTIHCIEMLPGKGAQMARSAGTSAMLLAREGLYAQVRLRSGEIRRVHIECRATIGEVGNEEHSLRQIGKAGANRWRGIRPTVRGVAMNPIDHPHGGGEGRTAAGRDPVSPWGTPTKGFRTRRNKRTTTMIVQRRHKR</sequence>
<evidence type="ECO:0000255" key="1">
    <source>
        <dbReference type="HAMAP-Rule" id="MF_01320"/>
    </source>
</evidence>
<evidence type="ECO:0000256" key="2">
    <source>
        <dbReference type="SAM" id="MobiDB-lite"/>
    </source>
</evidence>
<evidence type="ECO:0000305" key="3"/>
<protein>
    <recommendedName>
        <fullName evidence="1">Large ribosomal subunit protein uL2</fullName>
    </recommendedName>
    <alternativeName>
        <fullName evidence="3">50S ribosomal protein L2</fullName>
    </alternativeName>
</protein>
<name>RL2_BURMA</name>
<accession>Q62GK8</accession>
<reference key="1">
    <citation type="journal article" date="2004" name="Proc. Natl. Acad. Sci. U.S.A.">
        <title>Structural flexibility in the Burkholderia mallei genome.</title>
        <authorList>
            <person name="Nierman W.C."/>
            <person name="DeShazer D."/>
            <person name="Kim H.S."/>
            <person name="Tettelin H."/>
            <person name="Nelson K.E."/>
            <person name="Feldblyum T.V."/>
            <person name="Ulrich R.L."/>
            <person name="Ronning C.M."/>
            <person name="Brinkac L.M."/>
            <person name="Daugherty S.C."/>
            <person name="Davidsen T.D."/>
            <person name="DeBoy R.T."/>
            <person name="Dimitrov G."/>
            <person name="Dodson R.J."/>
            <person name="Durkin A.S."/>
            <person name="Gwinn M.L."/>
            <person name="Haft D.H."/>
            <person name="Khouri H.M."/>
            <person name="Kolonay J.F."/>
            <person name="Madupu R."/>
            <person name="Mohammoud Y."/>
            <person name="Nelson W.C."/>
            <person name="Radune D."/>
            <person name="Romero C.M."/>
            <person name="Sarria S."/>
            <person name="Selengut J."/>
            <person name="Shamblin C."/>
            <person name="Sullivan S.A."/>
            <person name="White O."/>
            <person name="Yu Y."/>
            <person name="Zafar N."/>
            <person name="Zhou L."/>
            <person name="Fraser C.M."/>
        </authorList>
    </citation>
    <scope>NUCLEOTIDE SEQUENCE [LARGE SCALE GENOMIC DNA]</scope>
    <source>
        <strain>ATCC 23344</strain>
    </source>
</reference>